<proteinExistence type="predicted"/>
<organism>
    <name type="scientific">Enterobacteria phage JP34</name>
    <name type="common">Bacteriophage JP34</name>
    <dbReference type="NCBI Taxonomy" id="12019"/>
    <lineage>
        <taxon>Viruses</taxon>
        <taxon>Riboviria</taxon>
        <taxon>Orthornavirae</taxon>
        <taxon>Lenarviricota</taxon>
        <taxon>Leviviricetes</taxon>
        <taxon>Norzivirales</taxon>
        <taxon>Fiersviridae</taxon>
        <taxon>Emesvirus</taxon>
        <taxon>Escherichia phage BZ13</taxon>
    </lineage>
</organism>
<feature type="chain" id="PRO_0000164853" description="RNA-directed RNA polymerase beta chain">
    <location>
        <begin position="1"/>
        <end position="100" status="greater than"/>
    </location>
</feature>
<feature type="non-terminal residue">
    <location>
        <position position="100"/>
    </location>
</feature>
<organismHost>
    <name type="scientific">Escherichia coli</name>
    <dbReference type="NCBI Taxonomy" id="562"/>
</organismHost>
<name>RDRP_BPJP3</name>
<reference key="1">
    <citation type="journal article" date="1989" name="Virology">
        <title>Nucleotide sequence from the ssRNA bacteriophage JP34 resolves the discrepancy between serological and biophysical classification.</title>
        <authorList>
            <person name="Adhin M.R."/>
            <person name="Hirashima A."/>
            <person name="van Duin J."/>
        </authorList>
    </citation>
    <scope>NUCLEOTIDE SEQUENCE [GENOMIC RNA]</scope>
</reference>
<accession>P34701</accession>
<protein>
    <recommendedName>
        <fullName>RNA-directed RNA polymerase beta chain</fullName>
        <ecNumber>2.7.7.48</ecNumber>
    </recommendedName>
    <alternativeName>
        <fullName>RNA replicase beta chain</fullName>
    </alternativeName>
</protein>
<sequence>MFRFTEIEKTLCMDRTRDCAVRFHVYLQSLDLGSSDPHSPDFDGLAYLRDECLTKHPSLGDSNSDARRKELAYAKLMDSDQRCKIQNSNGYDYSHIESGV</sequence>
<comment type="function">
    <text>This enzyme is part of the viral RNA-dependent RNA polymerase complex.</text>
</comment>
<comment type="catalytic activity">
    <reaction>
        <text>RNA(n) + a ribonucleoside 5'-triphosphate = RNA(n+1) + diphosphate</text>
        <dbReference type="Rhea" id="RHEA:21248"/>
        <dbReference type="Rhea" id="RHEA-COMP:14527"/>
        <dbReference type="Rhea" id="RHEA-COMP:17342"/>
        <dbReference type="ChEBI" id="CHEBI:33019"/>
        <dbReference type="ChEBI" id="CHEBI:61557"/>
        <dbReference type="ChEBI" id="CHEBI:140395"/>
        <dbReference type="EC" id="2.7.7.48"/>
    </reaction>
</comment>
<comment type="subunit">
    <text>The polymerase complex is composed of four chains, the three other proteins of the complex (alpha, gamma, and delta chains) are supplied by the host cell.</text>
</comment>
<keyword id="KW-0548">Nucleotidyltransferase</keyword>
<keyword id="KW-0696">RNA-directed RNA polymerase</keyword>
<keyword id="KW-0808">Transferase</keyword>
<keyword id="KW-0693">Viral RNA replication</keyword>
<dbReference type="EC" id="2.7.7.48"/>
<dbReference type="EMBL" id="J04343">
    <property type="protein sequence ID" value="AAA72212.1"/>
    <property type="molecule type" value="Genomic_RNA"/>
</dbReference>
<dbReference type="SMR" id="P34701"/>
<dbReference type="GO" id="GO:0003968">
    <property type="term" value="F:RNA-directed RNA polymerase activity"/>
    <property type="evidence" value="ECO:0007669"/>
    <property type="project" value="UniProtKB-KW"/>
</dbReference>
<dbReference type="GO" id="GO:0039694">
    <property type="term" value="P:viral RNA genome replication"/>
    <property type="evidence" value="ECO:0007669"/>
    <property type="project" value="InterPro"/>
</dbReference>
<dbReference type="InterPro" id="IPR005093">
    <property type="entry name" value="RNArep_beta"/>
</dbReference>
<dbReference type="Pfam" id="PF03431">
    <property type="entry name" value="RNA_replicase_B"/>
    <property type="match status" value="1"/>
</dbReference>